<evidence type="ECO:0000250" key="1">
    <source>
        <dbReference type="UniProtKB" id="P11101"/>
    </source>
</evidence>
<evidence type="ECO:0000250" key="2">
    <source>
        <dbReference type="UniProtKB" id="P11378"/>
    </source>
</evidence>
<evidence type="ECO:0000256" key="3">
    <source>
        <dbReference type="SAM" id="MobiDB-lite"/>
    </source>
</evidence>
<evidence type="ECO:0000269" key="4">
    <source>
    </source>
</evidence>
<evidence type="ECO:0000305" key="5"/>
<protein>
    <recommendedName>
        <fullName>Nuclear transition protein 2</fullName>
        <shortName>TP-2</shortName>
        <shortName>TP2</shortName>
    </recommendedName>
</protein>
<reference key="1">
    <citation type="journal article" date="1992" name="Biol. Chem. Hoppe-Seyler">
        <title>Characterization of four genes encoding basic proteins of the porcine spermatid nucleus and close linkage of three of them.</title>
        <authorList>
            <person name="Keime S."/>
            <person name="Heitland K."/>
            <person name="Kumm S."/>
            <person name="Schloesser M."/>
            <person name="Hroch N."/>
            <person name="Holtz W."/>
            <person name="Engel W."/>
        </authorList>
    </citation>
    <scope>NUCLEOTIDE SEQUENCE [GENOMIC DNA]</scope>
</reference>
<reference key="2">
    <citation type="journal article" date="1992" name="Anim. Genet.">
        <title>The nucleotide sequence of boar transition protein 2 (TNP2) cDNA and haploid expression of the gene during spermatogenesis.</title>
        <authorList>
            <person name="Keime S."/>
            <person name="Kumm S."/>
            <person name="Luerssen H."/>
            <person name="Engel W."/>
        </authorList>
    </citation>
    <scope>NUCLEOTIDE SEQUENCE</scope>
    <scope>TISSUE SPECIFICITY</scope>
    <source>
        <tissue>Testis</tissue>
    </source>
</reference>
<comment type="function">
    <text evidence="2">Plays a key role in the replacement of histones to protamine in the elongating spermatids of mammals. In condensing spermatids, loaded onto the nucleosomes, where it promotes the recruitment and processing of protamines, which are responsible for histone eviction.</text>
</comment>
<comment type="subcellular location">
    <subcellularLocation>
        <location evidence="1">Nucleus</location>
    </subcellularLocation>
    <subcellularLocation>
        <location evidence="1">Nucleus</location>
        <location evidence="1">Nucleolus</location>
    </subcellularLocation>
    <subcellularLocation>
        <location evidence="1">Chromosome</location>
    </subcellularLocation>
    <text evidence="1 2">Loaded onto the nucleosomes of condensing spermatids (By similarity). Nuclear import is mediated by IPO4. Nucleolar localization requires the protein to be phosphorylated (By similarity).</text>
</comment>
<comment type="tissue specificity">
    <text evidence="4">Testis. Expression is restricted to haploid germ cells.</text>
</comment>
<comment type="similarity">
    <text evidence="5">Belongs to the nuclear transition protein 2 family.</text>
</comment>
<organism>
    <name type="scientific">Sus scrofa</name>
    <name type="common">Pig</name>
    <dbReference type="NCBI Taxonomy" id="9823"/>
    <lineage>
        <taxon>Eukaryota</taxon>
        <taxon>Metazoa</taxon>
        <taxon>Chordata</taxon>
        <taxon>Craniata</taxon>
        <taxon>Vertebrata</taxon>
        <taxon>Euteleostomi</taxon>
        <taxon>Mammalia</taxon>
        <taxon>Eutheria</taxon>
        <taxon>Laurasiatheria</taxon>
        <taxon>Artiodactyla</taxon>
        <taxon>Suina</taxon>
        <taxon>Suidae</taxon>
        <taxon>Sus</taxon>
    </lineage>
</organism>
<gene>
    <name type="primary">TNP2</name>
</gene>
<feature type="chain" id="PRO_0000191431" description="Nuclear transition protein 2">
    <location>
        <begin position="1"/>
        <end position="137"/>
    </location>
</feature>
<feature type="region of interest" description="Disordered" evidence="3">
    <location>
        <begin position="1"/>
        <end position="137"/>
    </location>
</feature>
<feature type="short sequence motif" description="Nuclear localization signal" evidence="1">
    <location>
        <begin position="110"/>
        <end position="118"/>
    </location>
</feature>
<feature type="compositionally biased region" description="Polar residues" evidence="3">
    <location>
        <begin position="1"/>
        <end position="21"/>
    </location>
</feature>
<feature type="compositionally biased region" description="Low complexity" evidence="3">
    <location>
        <begin position="22"/>
        <end position="74"/>
    </location>
</feature>
<feature type="compositionally biased region" description="Basic residues" evidence="3">
    <location>
        <begin position="78"/>
        <end position="91"/>
    </location>
</feature>
<feature type="compositionally biased region" description="Basic residues" evidence="3">
    <location>
        <begin position="126"/>
        <end position="137"/>
    </location>
</feature>
<feature type="binding site" evidence="1">
    <location>
        <position position="12"/>
    </location>
    <ligand>
        <name>Zn(2+)</name>
        <dbReference type="ChEBI" id="CHEBI:29105"/>
    </ligand>
</feature>
<feature type="binding site" evidence="1">
    <location>
        <position position="16"/>
    </location>
    <ligand>
        <name>Zn(2+)</name>
        <dbReference type="ChEBI" id="CHEBI:29105"/>
    </ligand>
</feature>
<feature type="binding site" evidence="1">
    <location>
        <position position="24"/>
    </location>
    <ligand>
        <name>Zn(2+)</name>
        <dbReference type="ChEBI" id="CHEBI:29105"/>
    </ligand>
</feature>
<feature type="binding site" evidence="1">
    <location>
        <position position="29"/>
    </location>
    <ligand>
        <name>Zn(2+)</name>
        <dbReference type="ChEBI" id="CHEBI:29105"/>
    </ligand>
</feature>
<feature type="binding site" evidence="1">
    <location>
        <position position="31"/>
    </location>
    <ligand>
        <name>Zn(2+)</name>
        <dbReference type="ChEBI" id="CHEBI:29105"/>
    </ligand>
</feature>
<feature type="binding site" evidence="1">
    <location>
        <position position="35"/>
    </location>
    <ligand>
        <name>Zn(2+)</name>
        <dbReference type="ChEBI" id="CHEBI:29105"/>
    </ligand>
</feature>
<feature type="binding site" evidence="1">
    <location>
        <position position="38"/>
    </location>
    <ligand>
        <name>Zn(2+)</name>
        <dbReference type="ChEBI" id="CHEBI:29105"/>
    </ligand>
</feature>
<feature type="modified residue" description="Phosphoserine" evidence="1">
    <location>
        <position position="132"/>
    </location>
</feature>
<feature type="sequence conflict" description="In Ref. 2; X57989." evidence="5" ref="2">
    <original>GP</original>
    <variation>TGF</variation>
    <location>
        <begin position="20"/>
        <end position="21"/>
    </location>
</feature>
<accession>P29258</accession>
<proteinExistence type="evidence at transcript level"/>
<dbReference type="EMBL" id="M80677">
    <property type="status" value="NOT_ANNOTATED_CDS"/>
    <property type="molecule type" value="Genomic_DNA"/>
</dbReference>
<dbReference type="EMBL" id="X57989">
    <property type="status" value="NOT_ANNOTATED_CDS"/>
    <property type="molecule type" value="mRNA"/>
</dbReference>
<dbReference type="PIR" id="S21671">
    <property type="entry name" value="BGPG2"/>
</dbReference>
<dbReference type="SMR" id="P29258"/>
<dbReference type="STRING" id="9823.ENSSSCP00000025815"/>
<dbReference type="PaxDb" id="9823-ENSSSCP00000025815"/>
<dbReference type="PeptideAtlas" id="P29258"/>
<dbReference type="eggNOG" id="KOG4566">
    <property type="taxonomic scope" value="Eukaryota"/>
</dbReference>
<dbReference type="InParanoid" id="P29258"/>
<dbReference type="Proteomes" id="UP000008227">
    <property type="component" value="Unplaced"/>
</dbReference>
<dbReference type="Proteomes" id="UP000314985">
    <property type="component" value="Unplaced"/>
</dbReference>
<dbReference type="Proteomes" id="UP000694570">
    <property type="component" value="Unplaced"/>
</dbReference>
<dbReference type="Proteomes" id="UP000694571">
    <property type="component" value="Unplaced"/>
</dbReference>
<dbReference type="Proteomes" id="UP000694720">
    <property type="component" value="Unplaced"/>
</dbReference>
<dbReference type="Proteomes" id="UP000694722">
    <property type="component" value="Unplaced"/>
</dbReference>
<dbReference type="Proteomes" id="UP000694723">
    <property type="component" value="Unplaced"/>
</dbReference>
<dbReference type="Proteomes" id="UP000694724">
    <property type="component" value="Unplaced"/>
</dbReference>
<dbReference type="Proteomes" id="UP000694725">
    <property type="component" value="Unplaced"/>
</dbReference>
<dbReference type="Proteomes" id="UP000694726">
    <property type="component" value="Unplaced"/>
</dbReference>
<dbReference type="Proteomes" id="UP000694727">
    <property type="component" value="Unplaced"/>
</dbReference>
<dbReference type="Proteomes" id="UP000694728">
    <property type="component" value="Unplaced"/>
</dbReference>
<dbReference type="GO" id="GO:0005730">
    <property type="term" value="C:nucleolus"/>
    <property type="evidence" value="ECO:0007669"/>
    <property type="project" value="UniProtKB-SubCell"/>
</dbReference>
<dbReference type="GO" id="GO:0000786">
    <property type="term" value="C:nucleosome"/>
    <property type="evidence" value="ECO:0000250"/>
    <property type="project" value="UniProtKB"/>
</dbReference>
<dbReference type="GO" id="GO:0005634">
    <property type="term" value="C:nucleus"/>
    <property type="evidence" value="ECO:0000314"/>
    <property type="project" value="MGI"/>
</dbReference>
<dbReference type="GO" id="GO:0003677">
    <property type="term" value="F:DNA binding"/>
    <property type="evidence" value="ECO:0007669"/>
    <property type="project" value="UniProtKB-KW"/>
</dbReference>
<dbReference type="GO" id="GO:0008270">
    <property type="term" value="F:zinc ion binding"/>
    <property type="evidence" value="ECO:0000318"/>
    <property type="project" value="GO_Central"/>
</dbReference>
<dbReference type="GO" id="GO:0007340">
    <property type="term" value="P:acrosome reaction"/>
    <property type="evidence" value="ECO:0000318"/>
    <property type="project" value="GO_Central"/>
</dbReference>
<dbReference type="GO" id="GO:0007341">
    <property type="term" value="P:penetration of zona pellucida"/>
    <property type="evidence" value="ECO:0000318"/>
    <property type="project" value="GO_Central"/>
</dbReference>
<dbReference type="GO" id="GO:0010954">
    <property type="term" value="P:positive regulation of protein processing"/>
    <property type="evidence" value="ECO:0000250"/>
    <property type="project" value="UniProtKB"/>
</dbReference>
<dbReference type="GO" id="GO:0035092">
    <property type="term" value="P:sperm DNA condensation"/>
    <property type="evidence" value="ECO:0000250"/>
    <property type="project" value="UniProtKB"/>
</dbReference>
<dbReference type="GO" id="GO:0007283">
    <property type="term" value="P:spermatogenesis"/>
    <property type="evidence" value="ECO:0000318"/>
    <property type="project" value="GO_Central"/>
</dbReference>
<dbReference type="InterPro" id="IPR000678">
    <property type="entry name" value="TP2"/>
</dbReference>
<dbReference type="PANTHER" id="PTHR17488">
    <property type="entry name" value="NUCLEAR TRANSITION PROTEIN 2"/>
    <property type="match status" value="1"/>
</dbReference>
<dbReference type="PANTHER" id="PTHR17488:SF0">
    <property type="entry name" value="NUCLEAR TRANSITION PROTEIN 2"/>
    <property type="match status" value="1"/>
</dbReference>
<dbReference type="Pfam" id="PF01254">
    <property type="entry name" value="TP2"/>
    <property type="match status" value="1"/>
</dbReference>
<dbReference type="PROSITE" id="PS00970">
    <property type="entry name" value="TP2_1"/>
    <property type="match status" value="1"/>
</dbReference>
<dbReference type="PROSITE" id="PS00971">
    <property type="entry name" value="TP2_2"/>
    <property type="match status" value="1"/>
</dbReference>
<name>STP2_PIG</name>
<sequence length="137" mass="15301">MDTKTQSLPNAHTQPHSNSGPQSHACNQCSCSHHCQNCSQSCDRSQSCSRSRSSSQSPTGHRSLPGHQSQSLSPSPSPRHRKRAMHSHRCPSRPGTRSCSHSKKRKNVEGKANKRKGIKRSQQVYKTKRRSSGRKYN</sequence>
<keyword id="KW-0158">Chromosome</keyword>
<keyword id="KW-0217">Developmental protein</keyword>
<keyword id="KW-0221">Differentiation</keyword>
<keyword id="KW-0238">DNA-binding</keyword>
<keyword id="KW-0479">Metal-binding</keyword>
<keyword id="KW-0544">Nucleosome core</keyword>
<keyword id="KW-0539">Nucleus</keyword>
<keyword id="KW-0597">Phosphoprotein</keyword>
<keyword id="KW-1185">Reference proteome</keyword>
<keyword id="KW-0744">Spermatogenesis</keyword>
<keyword id="KW-0862">Zinc</keyword>